<evidence type="ECO:0000269" key="1">
    <source>
    </source>
</evidence>
<evidence type="ECO:0000305" key="2"/>
<evidence type="ECO:0000312" key="3">
    <source>
        <dbReference type="EMBL" id="AAC64517.1"/>
    </source>
</evidence>
<comment type="function">
    <text evidence="1">Displays antimicrobial activity against the Gram-positive bacteria B.subtilis ATCC 62037, S.aureus ATCC 15752 and S.mutans ATCC 25175, the Gram-negative bacteria E.coli ATCC 27325, P.putida ATCC 17426 and Serratia sp. ATCC 21074, and the fungi C.albicans ATCC 10231, C.neoformans ATCC 34881 and S.cerevisiae ATCC 44774. Does not possess hemolytic activity.</text>
</comment>
<comment type="developmental stage">
    <text evidence="1">Adult-specific. Not detected in eggs or 1-week-old worms but abundant in 6-month-old worms.</text>
</comment>
<comment type="induction">
    <text evidence="1">Constitutively expressed. Not induced by bacterial infection.</text>
</comment>
<comment type="mass spectrometry"/>
<organism>
    <name type="scientific">Lumbricus rubellus</name>
    <name type="common">Humus earthworm</name>
    <dbReference type="NCBI Taxonomy" id="35632"/>
    <lineage>
        <taxon>Eukaryota</taxon>
        <taxon>Metazoa</taxon>
        <taxon>Spiralia</taxon>
        <taxon>Lophotrochozoa</taxon>
        <taxon>Annelida</taxon>
        <taxon>Clitellata</taxon>
        <taxon>Oligochaeta</taxon>
        <taxon>Crassiclitellata</taxon>
        <taxon>Lumbricina</taxon>
        <taxon>Lumbricidae</taxon>
        <taxon>Lumbricinae</taxon>
        <taxon>Lumbricus</taxon>
    </lineage>
</organism>
<keyword id="KW-0044">Antibiotic</keyword>
<keyword id="KW-0929">Antimicrobial</keyword>
<keyword id="KW-0903">Direct protein sequencing</keyword>
<keyword id="KW-0295">Fungicide</keyword>
<name>LMBC1_LUMRU</name>
<reference evidence="2 3" key="1">
    <citation type="journal article" date="1998" name="Biochim. Biophys. Acta">
        <title>Lumbricin I, a novel proline-rich antimicrobial peptide from the earthworm: purification, cDNA cloning and molecular characterization.</title>
        <authorList>
            <person name="Cho J.H."/>
            <person name="Park C.B."/>
            <person name="Yoon Y.G."/>
            <person name="Kim S.C."/>
        </authorList>
    </citation>
    <scope>NUCLEOTIDE SEQUENCE [MRNA]</scope>
    <scope>PROTEIN SEQUENCE OF 15-36</scope>
    <scope>FUNCTION</scope>
    <scope>DEVELOPMENTAL STAGE</scope>
    <scope>INDUCTION</scope>
    <scope>MASS SPECTROMETRY</scope>
</reference>
<proteinExistence type="evidence at protein level"/>
<feature type="propeptide" id="PRO_0000389427" description="Removed in mature form" evidence="1">
    <location>
        <begin position="1"/>
        <end position="14"/>
    </location>
</feature>
<feature type="peptide" id="PRO_0000389428" description="Antimicrobial peptide lumbricin-1" evidence="1">
    <location>
        <begin position="15"/>
        <end position="76"/>
    </location>
</feature>
<sequence>MSLCISDYLYLTLTFSKYERQKDKRPYSERKNQYTGPQFLYPPERIPPQKVIKWNEEGLPIYEIPGEGGHAEPAAA</sequence>
<dbReference type="EMBL" id="AF060552">
    <property type="protein sequence ID" value="AAC64517.1"/>
    <property type="molecule type" value="mRNA"/>
</dbReference>
<dbReference type="GO" id="GO:0042742">
    <property type="term" value="P:defense response to bacterium"/>
    <property type="evidence" value="ECO:0007669"/>
    <property type="project" value="UniProtKB-KW"/>
</dbReference>
<dbReference type="GO" id="GO:0050832">
    <property type="term" value="P:defense response to fungus"/>
    <property type="evidence" value="ECO:0007669"/>
    <property type="project" value="UniProtKB-KW"/>
</dbReference>
<dbReference type="GO" id="GO:0031640">
    <property type="term" value="P:killing of cells of another organism"/>
    <property type="evidence" value="ECO:0007669"/>
    <property type="project" value="UniProtKB-KW"/>
</dbReference>
<protein>
    <recommendedName>
        <fullName evidence="3">Antimicrobial peptide lumbricin-1</fullName>
    </recommendedName>
</protein>
<accession>O96447</accession>